<reference key="1">
    <citation type="journal article" date="2006" name="Mol. Biol. Evol.">
        <title>The chloroplast genome sequence of Chara vulgaris sheds new light into the closest green algal relatives of land plants.</title>
        <authorList>
            <person name="Turmel M."/>
            <person name="Otis C."/>
            <person name="Lemieux C."/>
        </authorList>
    </citation>
    <scope>NUCLEOTIDE SEQUENCE [LARGE SCALE GENOMIC DNA]</scope>
</reference>
<sequence>MSEIIHVINPMSKWPLASQFGFNLDILETNLINLGVVIGTLLYFGNEVISNLLNKRKEIILNSIRDAEQRYEDATEKLKQANRDLEKAKFKANEIRIQGSTQIEIEKKELIYAADRDSKHLEESKNIAIHLEEQRILEEVRREVSGLAFQKTLIILNNRLTSQLQVEMIDYKIDLFFNNFQVSTNL</sequence>
<evidence type="ECO:0000255" key="1">
    <source>
        <dbReference type="HAMAP-Rule" id="MF_01398"/>
    </source>
</evidence>
<name>ATPF_CHAVU</name>
<comment type="function">
    <text evidence="1">F(1)F(0) ATP synthase produces ATP from ADP in the presence of a proton or sodium gradient. F-type ATPases consist of two structural domains, F(1) containing the extramembraneous catalytic core and F(0) containing the membrane proton channel, linked together by a central stalk and a peripheral stalk. During catalysis, ATP synthesis in the catalytic domain of F(1) is coupled via a rotary mechanism of the central stalk subunits to proton translocation.</text>
</comment>
<comment type="function">
    <text evidence="1">Component of the F(0) channel, it forms part of the peripheral stalk, linking F(1) to F(0).</text>
</comment>
<comment type="subunit">
    <text evidence="1">F-type ATPases have 2 components, F(1) - the catalytic core - and F(0) - the membrane proton channel. F(1) has five subunits: alpha(3), beta(3), gamma(1), delta(1), epsilon(1). F(0) has four main subunits: a(1), b(1), b'(1) and c(10-14). The alpha and beta chains form an alternating ring which encloses part of the gamma chain. F(1) is attached to F(0) by a central stalk formed by the gamma and epsilon chains, while a peripheral stalk is formed by the delta, b and b' chains.</text>
</comment>
<comment type="subcellular location">
    <subcellularLocation>
        <location evidence="1">Plastid</location>
        <location evidence="1">Chloroplast thylakoid membrane</location>
        <topology evidence="1">Single-pass membrane protein</topology>
    </subcellularLocation>
</comment>
<comment type="miscellaneous">
    <text>In plastids the F-type ATPase is also known as CF(1)CF(0).</text>
</comment>
<comment type="similarity">
    <text evidence="1">Belongs to the ATPase B chain family.</text>
</comment>
<accession>Q1ACM9</accession>
<keyword id="KW-0066">ATP synthesis</keyword>
<keyword id="KW-0138">CF(0)</keyword>
<keyword id="KW-0150">Chloroplast</keyword>
<keyword id="KW-0375">Hydrogen ion transport</keyword>
<keyword id="KW-0406">Ion transport</keyword>
<keyword id="KW-0472">Membrane</keyword>
<keyword id="KW-0934">Plastid</keyword>
<keyword id="KW-0793">Thylakoid</keyword>
<keyword id="KW-0812">Transmembrane</keyword>
<keyword id="KW-1133">Transmembrane helix</keyword>
<keyword id="KW-0813">Transport</keyword>
<feature type="chain" id="PRO_0000368916" description="ATP synthase subunit b, chloroplastic">
    <location>
        <begin position="1"/>
        <end position="186"/>
    </location>
</feature>
<feature type="transmembrane region" description="Helical" evidence="1">
    <location>
        <begin position="26"/>
        <end position="44"/>
    </location>
</feature>
<protein>
    <recommendedName>
        <fullName evidence="1">ATP synthase subunit b, chloroplastic</fullName>
    </recommendedName>
    <alternativeName>
        <fullName evidence="1">ATP synthase F(0) sector subunit b</fullName>
    </alternativeName>
    <alternativeName>
        <fullName evidence="1">ATPase subunit I</fullName>
    </alternativeName>
</protein>
<gene>
    <name evidence="1" type="primary">atpF</name>
</gene>
<proteinExistence type="inferred from homology"/>
<dbReference type="EMBL" id="DQ229107">
    <property type="protein sequence ID" value="ABA61926.1"/>
    <property type="molecule type" value="Genomic_DNA"/>
</dbReference>
<dbReference type="RefSeq" id="YP_635718.1">
    <property type="nucleotide sequence ID" value="NC_008097.1"/>
</dbReference>
<dbReference type="SMR" id="Q1ACM9"/>
<dbReference type="GeneID" id="4100213"/>
<dbReference type="GO" id="GO:0009535">
    <property type="term" value="C:chloroplast thylakoid membrane"/>
    <property type="evidence" value="ECO:0007669"/>
    <property type="project" value="UniProtKB-SubCell"/>
</dbReference>
<dbReference type="GO" id="GO:0045259">
    <property type="term" value="C:proton-transporting ATP synthase complex"/>
    <property type="evidence" value="ECO:0007669"/>
    <property type="project" value="UniProtKB-KW"/>
</dbReference>
<dbReference type="GO" id="GO:0046933">
    <property type="term" value="F:proton-transporting ATP synthase activity, rotational mechanism"/>
    <property type="evidence" value="ECO:0007669"/>
    <property type="project" value="UniProtKB-UniRule"/>
</dbReference>
<dbReference type="CDD" id="cd06503">
    <property type="entry name" value="ATP-synt_Fo_b"/>
    <property type="match status" value="1"/>
</dbReference>
<dbReference type="HAMAP" id="MF_01398">
    <property type="entry name" value="ATP_synth_b_bprime"/>
    <property type="match status" value="1"/>
</dbReference>
<dbReference type="InterPro" id="IPR002146">
    <property type="entry name" value="ATP_synth_b/b'su_bac/chlpt"/>
</dbReference>
<dbReference type="PANTHER" id="PTHR34264">
    <property type="entry name" value="ATP SYNTHASE SUBUNIT B, CHLOROPLASTIC"/>
    <property type="match status" value="1"/>
</dbReference>
<dbReference type="PANTHER" id="PTHR34264:SF3">
    <property type="entry name" value="ATP SYNTHASE SUBUNIT B, CHLOROPLASTIC"/>
    <property type="match status" value="1"/>
</dbReference>
<dbReference type="Pfam" id="PF00430">
    <property type="entry name" value="ATP-synt_B"/>
    <property type="match status" value="1"/>
</dbReference>
<organism>
    <name type="scientific">Chara vulgaris</name>
    <name type="common">Common stonewort</name>
    <dbReference type="NCBI Taxonomy" id="55564"/>
    <lineage>
        <taxon>Eukaryota</taxon>
        <taxon>Viridiplantae</taxon>
        <taxon>Streptophyta</taxon>
        <taxon>Charophyceae</taxon>
        <taxon>Charales</taxon>
        <taxon>Characeae</taxon>
        <taxon>Chara</taxon>
    </lineage>
</organism>
<geneLocation type="chloroplast"/>